<organism>
    <name type="scientific">Schizosaccharomyces pombe (strain 972 / ATCC 24843)</name>
    <name type="common">Fission yeast</name>
    <dbReference type="NCBI Taxonomy" id="284812"/>
    <lineage>
        <taxon>Eukaryota</taxon>
        <taxon>Fungi</taxon>
        <taxon>Dikarya</taxon>
        <taxon>Ascomycota</taxon>
        <taxon>Taphrinomycotina</taxon>
        <taxon>Schizosaccharomycetes</taxon>
        <taxon>Schizosaccharomycetales</taxon>
        <taxon>Schizosaccharomycetaceae</taxon>
        <taxon>Schizosaccharomyces</taxon>
    </lineage>
</organism>
<feature type="chain" id="PRO_0000116429" description="WD repeat-containing protein 21">
    <location>
        <begin position="1"/>
        <end position="420"/>
    </location>
</feature>
<feature type="repeat" description="WD 1">
    <location>
        <begin position="251"/>
        <end position="289"/>
    </location>
</feature>
<feature type="repeat" description="WD 2">
    <location>
        <begin position="293"/>
        <end position="332"/>
    </location>
</feature>
<feature type="repeat" description="WD 3">
    <location>
        <begin position="341"/>
        <end position="383"/>
    </location>
</feature>
<feature type="short sequence motif" description="DDB-boX">
    <location>
        <begin position="73"/>
        <end position="75"/>
    </location>
</feature>
<dbReference type="EMBL" id="CU329670">
    <property type="protein sequence ID" value="CAA91505.1"/>
    <property type="molecule type" value="Genomic_DNA"/>
</dbReference>
<dbReference type="PIR" id="S62541">
    <property type="entry name" value="S62541"/>
</dbReference>
<dbReference type="RefSeq" id="NP_592888.1">
    <property type="nucleotide sequence ID" value="NM_001018288.2"/>
</dbReference>
<dbReference type="SMR" id="Q09873"/>
<dbReference type="BioGRID" id="278035">
    <property type="interactions" value="23"/>
</dbReference>
<dbReference type="FunCoup" id="Q09873">
    <property type="interactions" value="5"/>
</dbReference>
<dbReference type="STRING" id="284812.Q09873"/>
<dbReference type="iPTMnet" id="Q09873"/>
<dbReference type="PaxDb" id="4896-SPAC12G12.10.1"/>
<dbReference type="EnsemblFungi" id="SPAC12G12.10.1">
    <property type="protein sequence ID" value="SPAC12G12.10.1:pep"/>
    <property type="gene ID" value="SPAC12G12.10"/>
</dbReference>
<dbReference type="GeneID" id="2541535"/>
<dbReference type="KEGG" id="spo:2541535"/>
<dbReference type="PomBase" id="SPAC12G12.10">
    <property type="gene designation" value="wdr21"/>
</dbReference>
<dbReference type="VEuPathDB" id="FungiDB:SPAC12G12.10"/>
<dbReference type="eggNOG" id="KOG2695">
    <property type="taxonomic scope" value="Eukaryota"/>
</dbReference>
<dbReference type="HOGENOM" id="CLU_613968_0_0_1"/>
<dbReference type="InParanoid" id="Q09873"/>
<dbReference type="OMA" id="TESKAHM"/>
<dbReference type="PhylomeDB" id="Q09873"/>
<dbReference type="Reactome" id="R-SPO-8951664">
    <property type="pathway name" value="Neddylation"/>
</dbReference>
<dbReference type="PRO" id="PR:Q09873"/>
<dbReference type="Proteomes" id="UP000002485">
    <property type="component" value="Chromosome I"/>
</dbReference>
<dbReference type="GO" id="GO:0080008">
    <property type="term" value="C:Cul4-RING E3 ubiquitin ligase complex"/>
    <property type="evidence" value="ECO:0000318"/>
    <property type="project" value="GO_Central"/>
</dbReference>
<dbReference type="GO" id="GO:0005829">
    <property type="term" value="C:cytosol"/>
    <property type="evidence" value="ECO:0007005"/>
    <property type="project" value="PomBase"/>
</dbReference>
<dbReference type="GO" id="GO:0070913">
    <property type="term" value="C:Ddb1-Wdr21 complex"/>
    <property type="evidence" value="ECO:0000314"/>
    <property type="project" value="PomBase"/>
</dbReference>
<dbReference type="GO" id="GO:0005634">
    <property type="term" value="C:nucleus"/>
    <property type="evidence" value="ECO:0007005"/>
    <property type="project" value="PomBase"/>
</dbReference>
<dbReference type="GO" id="GO:0006283">
    <property type="term" value="P:transcription-coupled nucleotide-excision repair"/>
    <property type="evidence" value="ECO:0000305"/>
    <property type="project" value="PomBase"/>
</dbReference>
<dbReference type="Gene3D" id="2.130.10.10">
    <property type="entry name" value="YVTN repeat-like/Quinoprotein amine dehydrogenase"/>
    <property type="match status" value="1"/>
</dbReference>
<dbReference type="InterPro" id="IPR052254">
    <property type="entry name" value="CUL4-DDB1_E3_ligase_receptor"/>
</dbReference>
<dbReference type="InterPro" id="IPR015943">
    <property type="entry name" value="WD40/YVTN_repeat-like_dom_sf"/>
</dbReference>
<dbReference type="InterPro" id="IPR036322">
    <property type="entry name" value="WD40_repeat_dom_sf"/>
</dbReference>
<dbReference type="InterPro" id="IPR001680">
    <property type="entry name" value="WD40_rpt"/>
</dbReference>
<dbReference type="PANTHER" id="PTHR44472:SF1">
    <property type="entry name" value="DDB1 AND CUL4 ASSOCIATED FACTOR 4"/>
    <property type="match status" value="1"/>
</dbReference>
<dbReference type="PANTHER" id="PTHR44472">
    <property type="entry name" value="DDB1- AND CUL4-ASSOCIATED FACTOR 4-RELATED"/>
    <property type="match status" value="1"/>
</dbReference>
<dbReference type="Pfam" id="PF23761">
    <property type="entry name" value="Beta-prop_DCAF4"/>
    <property type="match status" value="1"/>
</dbReference>
<dbReference type="SMART" id="SM00320">
    <property type="entry name" value="WD40"/>
    <property type="match status" value="3"/>
</dbReference>
<dbReference type="SUPFAM" id="SSF50978">
    <property type="entry name" value="WD40 repeat-like"/>
    <property type="match status" value="1"/>
</dbReference>
<sequence length="420" mass="47525">MSGLPFHIPGYYYNSEKKRYFRIISSGQSTPSSNIYTKERLKRGKRFNNISKERTKGKGGNPVFNFSTYLFDRQFSQYPYSCNDDRDYLCAKNLKKINLRQLPVGTELQKIGWLREVNTIILTSKNGDILGCCLTPEDKSGVANEKYTSEGSIQDFSLSRIGLSNNPISSLVCNAMQIFWSTSPSLQNEGQFHISTYNQLLGESNNYRWGSLKLLKTPLCAESIGEMGFAVGGTSKIAIINREGKLTQSLQSKGDVFSLKYLGDNLVIAGCRNKSVLVYDLRTKKECVQRFYHGSSICSMQNLDFSQPKLLVSGLESKISLYDCRFLQSKKRPQSIMSYMGHSNLLERNLALMKNENGSIFSSAGDDYVLRFWKTDCSLPFKEMRVDDGKYLCRDGSWVKAMNGTGWVLPYGRGLLIYEP</sequence>
<comment type="subcellular location">
    <subcellularLocation>
        <location evidence="1">Cytoplasm</location>
    </subcellularLocation>
    <subcellularLocation>
        <location evidence="1">Nucleus</location>
    </subcellularLocation>
</comment>
<comment type="domain">
    <text evidence="2">The DDB-box is specifically required for ddb1-binding.</text>
</comment>
<proteinExistence type="evidence at protein level"/>
<accession>Q09873</accession>
<keyword id="KW-0963">Cytoplasm</keyword>
<keyword id="KW-0539">Nucleus</keyword>
<keyword id="KW-1185">Reference proteome</keyword>
<keyword id="KW-0677">Repeat</keyword>
<keyword id="KW-0853">WD repeat</keyword>
<name>WDR21_SCHPO</name>
<reference key="1">
    <citation type="journal article" date="2002" name="Nature">
        <title>The genome sequence of Schizosaccharomyces pombe.</title>
        <authorList>
            <person name="Wood V."/>
            <person name="Gwilliam R."/>
            <person name="Rajandream M.A."/>
            <person name="Lyne M.H."/>
            <person name="Lyne R."/>
            <person name="Stewart A."/>
            <person name="Sgouros J.G."/>
            <person name="Peat N."/>
            <person name="Hayles J."/>
            <person name="Baker S.G."/>
            <person name="Basham D."/>
            <person name="Bowman S."/>
            <person name="Brooks K."/>
            <person name="Brown D."/>
            <person name="Brown S."/>
            <person name="Chillingworth T."/>
            <person name="Churcher C.M."/>
            <person name="Collins M."/>
            <person name="Connor R."/>
            <person name="Cronin A."/>
            <person name="Davis P."/>
            <person name="Feltwell T."/>
            <person name="Fraser A."/>
            <person name="Gentles S."/>
            <person name="Goble A."/>
            <person name="Hamlin N."/>
            <person name="Harris D.E."/>
            <person name="Hidalgo J."/>
            <person name="Hodgson G."/>
            <person name="Holroyd S."/>
            <person name="Hornsby T."/>
            <person name="Howarth S."/>
            <person name="Huckle E.J."/>
            <person name="Hunt S."/>
            <person name="Jagels K."/>
            <person name="James K.D."/>
            <person name="Jones L."/>
            <person name="Jones M."/>
            <person name="Leather S."/>
            <person name="McDonald S."/>
            <person name="McLean J."/>
            <person name="Mooney P."/>
            <person name="Moule S."/>
            <person name="Mungall K.L."/>
            <person name="Murphy L.D."/>
            <person name="Niblett D."/>
            <person name="Odell C."/>
            <person name="Oliver K."/>
            <person name="O'Neil S."/>
            <person name="Pearson D."/>
            <person name="Quail M.A."/>
            <person name="Rabbinowitsch E."/>
            <person name="Rutherford K.M."/>
            <person name="Rutter S."/>
            <person name="Saunders D."/>
            <person name="Seeger K."/>
            <person name="Sharp S."/>
            <person name="Skelton J."/>
            <person name="Simmonds M.N."/>
            <person name="Squares R."/>
            <person name="Squares S."/>
            <person name="Stevens K."/>
            <person name="Taylor K."/>
            <person name="Taylor R.G."/>
            <person name="Tivey A."/>
            <person name="Walsh S.V."/>
            <person name="Warren T."/>
            <person name="Whitehead S."/>
            <person name="Woodward J.R."/>
            <person name="Volckaert G."/>
            <person name="Aert R."/>
            <person name="Robben J."/>
            <person name="Grymonprez B."/>
            <person name="Weltjens I."/>
            <person name="Vanstreels E."/>
            <person name="Rieger M."/>
            <person name="Schaefer M."/>
            <person name="Mueller-Auer S."/>
            <person name="Gabel C."/>
            <person name="Fuchs M."/>
            <person name="Duesterhoeft A."/>
            <person name="Fritzc C."/>
            <person name="Holzer E."/>
            <person name="Moestl D."/>
            <person name="Hilbert H."/>
            <person name="Borzym K."/>
            <person name="Langer I."/>
            <person name="Beck A."/>
            <person name="Lehrach H."/>
            <person name="Reinhardt R."/>
            <person name="Pohl T.M."/>
            <person name="Eger P."/>
            <person name="Zimmermann W."/>
            <person name="Wedler H."/>
            <person name="Wambutt R."/>
            <person name="Purnelle B."/>
            <person name="Goffeau A."/>
            <person name="Cadieu E."/>
            <person name="Dreano S."/>
            <person name="Gloux S."/>
            <person name="Lelaure V."/>
            <person name="Mottier S."/>
            <person name="Galibert F."/>
            <person name="Aves S.J."/>
            <person name="Xiang Z."/>
            <person name="Hunt C."/>
            <person name="Moore K."/>
            <person name="Hurst S.M."/>
            <person name="Lucas M."/>
            <person name="Rochet M."/>
            <person name="Gaillardin C."/>
            <person name="Tallada V.A."/>
            <person name="Garzon A."/>
            <person name="Thode G."/>
            <person name="Daga R.R."/>
            <person name="Cruzado L."/>
            <person name="Jimenez J."/>
            <person name="Sanchez M."/>
            <person name="del Rey F."/>
            <person name="Benito J."/>
            <person name="Dominguez A."/>
            <person name="Revuelta J.L."/>
            <person name="Moreno S."/>
            <person name="Armstrong J."/>
            <person name="Forsburg S.L."/>
            <person name="Cerutti L."/>
            <person name="Lowe T."/>
            <person name="McCombie W.R."/>
            <person name="Paulsen I."/>
            <person name="Potashkin J."/>
            <person name="Shpakovski G.V."/>
            <person name="Ussery D."/>
            <person name="Barrell B.G."/>
            <person name="Nurse P."/>
        </authorList>
    </citation>
    <scope>NUCLEOTIDE SEQUENCE [LARGE SCALE GENOMIC DNA]</scope>
    <source>
        <strain>972 / ATCC 24843</strain>
    </source>
</reference>
<reference key="2">
    <citation type="journal article" date="2006" name="Nat. Biotechnol.">
        <title>ORFeome cloning and global analysis of protein localization in the fission yeast Schizosaccharomyces pombe.</title>
        <authorList>
            <person name="Matsuyama A."/>
            <person name="Arai R."/>
            <person name="Yashiroda Y."/>
            <person name="Shirai A."/>
            <person name="Kamata A."/>
            <person name="Sekido S."/>
            <person name="Kobayashi Y."/>
            <person name="Hashimoto A."/>
            <person name="Hamamoto M."/>
            <person name="Hiraoka Y."/>
            <person name="Horinouchi S."/>
            <person name="Yoshida M."/>
        </authorList>
    </citation>
    <scope>SUBCELLULAR LOCATION [LARGE SCALE ANALYSIS]</scope>
</reference>
<reference key="3">
    <citation type="journal article" date="2008" name="Mol. Cell. Biol.">
        <title>Schizosaccharomyces pombe Ddb1 recruits substrate-specific adaptor proteins through a novel protein motif, the DDB-box.</title>
        <authorList>
            <person name="Fukumoto Y."/>
            <person name="Dohmae N."/>
            <person name="Hanaoka F."/>
        </authorList>
    </citation>
    <scope>IDENTIFICATION BY MASS SPECTROMETRY</scope>
    <scope>INTERACTION WITH DDB1</scope>
    <scope>DOMAIN</scope>
</reference>
<gene>
    <name type="primary">wdr21</name>
    <name type="ORF">SPAC12G12.10</name>
</gene>
<evidence type="ECO:0000269" key="1">
    <source>
    </source>
</evidence>
<evidence type="ECO:0000269" key="2">
    <source>
    </source>
</evidence>
<protein>
    <recommendedName>
        <fullName>WD repeat-containing protein 21</fullName>
    </recommendedName>
</protein>